<comment type="function">
    <text evidence="1">Pole-localizer protein involved in the regulation of several cellular processes.</text>
</comment>
<comment type="subcellular location">
    <subcellularLocation>
        <location evidence="1">Cytoplasm</location>
    </subcellularLocation>
</comment>
<comment type="similarity">
    <text evidence="1">Belongs to the pole-localizer TmaR family.</text>
</comment>
<evidence type="ECO:0000255" key="1">
    <source>
        <dbReference type="HAMAP-Rule" id="MF_00683"/>
    </source>
</evidence>
<name>TMAR_MANSM</name>
<protein>
    <recommendedName>
        <fullName evidence="1">Pole-localizer protein TmaR</fullName>
    </recommendedName>
</protein>
<gene>
    <name evidence="1" type="primary">tmaR</name>
    <name type="ordered locus">MS1572</name>
</gene>
<proteinExistence type="inferred from homology"/>
<reference key="1">
    <citation type="journal article" date="2004" name="Nat. Biotechnol.">
        <title>The genome sequence of the capnophilic rumen bacterium Mannheimia succiniciproducens.</title>
        <authorList>
            <person name="Hong S.H."/>
            <person name="Kim J.S."/>
            <person name="Lee S.Y."/>
            <person name="In Y.H."/>
            <person name="Choi S.S."/>
            <person name="Rih J.-K."/>
            <person name="Kim C.H."/>
            <person name="Jeong H."/>
            <person name="Hur C.G."/>
            <person name="Kim J.J."/>
        </authorList>
    </citation>
    <scope>NUCLEOTIDE SEQUENCE [LARGE SCALE GENOMIC DNA]</scope>
    <source>
        <strain>KCTC 0769BP / MBEL55E</strain>
    </source>
</reference>
<feature type="chain" id="PRO_1000044933" description="Pole-localizer protein TmaR">
    <location>
        <begin position="1"/>
        <end position="114"/>
    </location>
</feature>
<feature type="coiled-coil region" evidence="1">
    <location>
        <begin position="70"/>
        <end position="111"/>
    </location>
</feature>
<accession>Q65S81</accession>
<keyword id="KW-0175">Coiled coil</keyword>
<keyword id="KW-0963">Cytoplasm</keyword>
<sequence>MENVNKQSFQDVLEYVRLYRLRNKLLRDIGDNDRKIRDNQKRVLLLDNLSQYITNDMSVEDIRAIIENMRDDYEGRVDDYMIRNADLSKERREIKEKMKAQKKAHAELLKKADD</sequence>
<dbReference type="EMBL" id="AE016827">
    <property type="protein sequence ID" value="AAU38179.1"/>
    <property type="molecule type" value="Genomic_DNA"/>
</dbReference>
<dbReference type="RefSeq" id="WP_011200744.1">
    <property type="nucleotide sequence ID" value="NC_006300.1"/>
</dbReference>
<dbReference type="SMR" id="Q65S81"/>
<dbReference type="STRING" id="221988.MS1572"/>
<dbReference type="KEGG" id="msu:MS1572"/>
<dbReference type="eggNOG" id="COG2926">
    <property type="taxonomic scope" value="Bacteria"/>
</dbReference>
<dbReference type="HOGENOM" id="CLU_153146_0_0_6"/>
<dbReference type="OrthoDB" id="90485at2"/>
<dbReference type="Proteomes" id="UP000000607">
    <property type="component" value="Chromosome"/>
</dbReference>
<dbReference type="GO" id="GO:0005829">
    <property type="term" value="C:cytosol"/>
    <property type="evidence" value="ECO:0007669"/>
    <property type="project" value="TreeGrafter"/>
</dbReference>
<dbReference type="HAMAP" id="MF_00683">
    <property type="entry name" value="Pole_loc_TmaR"/>
    <property type="match status" value="1"/>
</dbReference>
<dbReference type="InterPro" id="IPR007458">
    <property type="entry name" value="DUF496"/>
</dbReference>
<dbReference type="NCBIfam" id="NF003844">
    <property type="entry name" value="PRK05423.1"/>
    <property type="match status" value="1"/>
</dbReference>
<dbReference type="PANTHER" id="PTHR39591">
    <property type="entry name" value="UPF0265 PROTEIN YEEX"/>
    <property type="match status" value="1"/>
</dbReference>
<dbReference type="PANTHER" id="PTHR39591:SF1">
    <property type="entry name" value="UPF0265 PROTEIN YEEX"/>
    <property type="match status" value="1"/>
</dbReference>
<dbReference type="Pfam" id="PF04363">
    <property type="entry name" value="DUF496"/>
    <property type="match status" value="1"/>
</dbReference>
<dbReference type="PIRSF" id="PIRSF028773">
    <property type="entry name" value="UCP028773"/>
    <property type="match status" value="1"/>
</dbReference>
<organism>
    <name type="scientific">Mannheimia succiniciproducens (strain KCTC 0769BP / MBEL55E)</name>
    <dbReference type="NCBI Taxonomy" id="221988"/>
    <lineage>
        <taxon>Bacteria</taxon>
        <taxon>Pseudomonadati</taxon>
        <taxon>Pseudomonadota</taxon>
        <taxon>Gammaproteobacteria</taxon>
        <taxon>Pasteurellales</taxon>
        <taxon>Pasteurellaceae</taxon>
        <taxon>Basfia</taxon>
    </lineage>
</organism>